<feature type="chain" id="PRO_1000065165" description="Regulatory protein RecX">
    <location>
        <begin position="1"/>
        <end position="166"/>
    </location>
</feature>
<gene>
    <name evidence="1" type="primary">recX</name>
    <name type="ordered locus">EcE24377A_2982</name>
</gene>
<evidence type="ECO:0000255" key="1">
    <source>
        <dbReference type="HAMAP-Rule" id="MF_01114"/>
    </source>
</evidence>
<protein>
    <recommendedName>
        <fullName evidence="1">Regulatory protein RecX</fullName>
    </recommendedName>
</protein>
<keyword id="KW-0963">Cytoplasm</keyword>
<keyword id="KW-1185">Reference proteome</keyword>
<organism>
    <name type="scientific">Escherichia coli O139:H28 (strain E24377A / ETEC)</name>
    <dbReference type="NCBI Taxonomy" id="331111"/>
    <lineage>
        <taxon>Bacteria</taxon>
        <taxon>Pseudomonadati</taxon>
        <taxon>Pseudomonadota</taxon>
        <taxon>Gammaproteobacteria</taxon>
        <taxon>Enterobacterales</taxon>
        <taxon>Enterobacteriaceae</taxon>
        <taxon>Escherichia</taxon>
    </lineage>
</organism>
<proteinExistence type="inferred from homology"/>
<accession>A7ZQC7</accession>
<reference key="1">
    <citation type="journal article" date="2008" name="J. Bacteriol.">
        <title>The pangenome structure of Escherichia coli: comparative genomic analysis of E. coli commensal and pathogenic isolates.</title>
        <authorList>
            <person name="Rasko D.A."/>
            <person name="Rosovitz M.J."/>
            <person name="Myers G.S.A."/>
            <person name="Mongodin E.F."/>
            <person name="Fricke W.F."/>
            <person name="Gajer P."/>
            <person name="Crabtree J."/>
            <person name="Sebaihia M."/>
            <person name="Thomson N.R."/>
            <person name="Chaudhuri R."/>
            <person name="Henderson I.R."/>
            <person name="Sperandio V."/>
            <person name="Ravel J."/>
        </authorList>
    </citation>
    <scope>NUCLEOTIDE SEQUENCE [LARGE SCALE GENOMIC DNA]</scope>
    <source>
        <strain>E24377A / ETEC</strain>
    </source>
</reference>
<comment type="function">
    <text evidence="1">Modulates RecA activity.</text>
</comment>
<comment type="subcellular location">
    <subcellularLocation>
        <location evidence="1">Cytoplasm</location>
    </subcellularLocation>
</comment>
<comment type="similarity">
    <text evidence="1">Belongs to the RecX family.</text>
</comment>
<name>RECX_ECO24</name>
<dbReference type="EMBL" id="CP000800">
    <property type="protein sequence ID" value="ABV18668.1"/>
    <property type="molecule type" value="Genomic_DNA"/>
</dbReference>
<dbReference type="RefSeq" id="WP_000140506.1">
    <property type="nucleotide sequence ID" value="NC_009801.1"/>
</dbReference>
<dbReference type="SMR" id="A7ZQC7"/>
<dbReference type="GeneID" id="75172780"/>
<dbReference type="KEGG" id="ecw:EcE24377A_2982"/>
<dbReference type="HOGENOM" id="CLU_066607_3_2_6"/>
<dbReference type="Proteomes" id="UP000001122">
    <property type="component" value="Chromosome"/>
</dbReference>
<dbReference type="GO" id="GO:0005737">
    <property type="term" value="C:cytoplasm"/>
    <property type="evidence" value="ECO:0007669"/>
    <property type="project" value="UniProtKB-SubCell"/>
</dbReference>
<dbReference type="GO" id="GO:0006282">
    <property type="term" value="P:regulation of DNA repair"/>
    <property type="evidence" value="ECO:0007669"/>
    <property type="project" value="UniProtKB-UniRule"/>
</dbReference>
<dbReference type="FunFam" id="1.10.10.10:FF:000133">
    <property type="entry name" value="Regulatory protein RecX"/>
    <property type="match status" value="1"/>
</dbReference>
<dbReference type="FunFam" id="1.10.10.10:FF:000134">
    <property type="entry name" value="Regulatory protein RecX"/>
    <property type="match status" value="1"/>
</dbReference>
<dbReference type="FunFam" id="1.10.10.10:FF:000209">
    <property type="entry name" value="Regulatory protein RecX"/>
    <property type="match status" value="1"/>
</dbReference>
<dbReference type="Gene3D" id="1.10.10.10">
    <property type="entry name" value="Winged helix-like DNA-binding domain superfamily/Winged helix DNA-binding domain"/>
    <property type="match status" value="3"/>
</dbReference>
<dbReference type="HAMAP" id="MF_01114">
    <property type="entry name" value="RecX"/>
    <property type="match status" value="1"/>
</dbReference>
<dbReference type="InterPro" id="IPR053926">
    <property type="entry name" value="RecX_HTH_1st"/>
</dbReference>
<dbReference type="InterPro" id="IPR053924">
    <property type="entry name" value="RecX_HTH_2nd"/>
</dbReference>
<dbReference type="InterPro" id="IPR053925">
    <property type="entry name" value="RecX_HTH_3rd"/>
</dbReference>
<dbReference type="InterPro" id="IPR003783">
    <property type="entry name" value="Regulatory_RecX"/>
</dbReference>
<dbReference type="InterPro" id="IPR036388">
    <property type="entry name" value="WH-like_DNA-bd_sf"/>
</dbReference>
<dbReference type="NCBIfam" id="NF001052">
    <property type="entry name" value="PRK00117.1-1"/>
    <property type="match status" value="1"/>
</dbReference>
<dbReference type="PANTHER" id="PTHR33602">
    <property type="entry name" value="REGULATORY PROTEIN RECX FAMILY PROTEIN"/>
    <property type="match status" value="1"/>
</dbReference>
<dbReference type="PANTHER" id="PTHR33602:SF1">
    <property type="entry name" value="REGULATORY PROTEIN RECX FAMILY PROTEIN"/>
    <property type="match status" value="1"/>
</dbReference>
<dbReference type="Pfam" id="PF21982">
    <property type="entry name" value="RecX_HTH1"/>
    <property type="match status" value="1"/>
</dbReference>
<dbReference type="Pfam" id="PF02631">
    <property type="entry name" value="RecX_HTH2"/>
    <property type="match status" value="1"/>
</dbReference>
<dbReference type="Pfam" id="PF21981">
    <property type="entry name" value="RecX_HTH3"/>
    <property type="match status" value="1"/>
</dbReference>
<sequence>MTESTSRRPAYARLLDRAVRILAVRDHSEQELRRKLAAPIMGKNGPEEIDATAEDYERVIAWCHEHGYLDDSRFVARFIASRSRKGYGPARIRQELNQKGISREATEKAMRECDIDWCALARDQATRKYGEPLPTVFSEKVKIQRFLLYRGYLMEDIQDIWRNFAD</sequence>